<dbReference type="EMBL" id="CP000246">
    <property type="protein sequence ID" value="ABG82366.1"/>
    <property type="molecule type" value="Genomic_DNA"/>
</dbReference>
<dbReference type="RefSeq" id="WP_003457993.1">
    <property type="nucleotide sequence ID" value="NC_008261.1"/>
</dbReference>
<dbReference type="SMR" id="Q0TU86"/>
<dbReference type="STRING" id="195103.CPF_0345"/>
<dbReference type="PaxDb" id="195103-CPF_0345"/>
<dbReference type="DNASU" id="4202429"/>
<dbReference type="GeneID" id="93003309"/>
<dbReference type="KEGG" id="cpf:CPF_0345"/>
<dbReference type="eggNOG" id="COG1481">
    <property type="taxonomic scope" value="Bacteria"/>
</dbReference>
<dbReference type="HOGENOM" id="CLU_053282_0_0_9"/>
<dbReference type="Proteomes" id="UP000001823">
    <property type="component" value="Chromosome"/>
</dbReference>
<dbReference type="GO" id="GO:0003677">
    <property type="term" value="F:DNA binding"/>
    <property type="evidence" value="ECO:0007669"/>
    <property type="project" value="UniProtKB-UniRule"/>
</dbReference>
<dbReference type="GO" id="GO:0004519">
    <property type="term" value="F:endonuclease activity"/>
    <property type="evidence" value="ECO:0007669"/>
    <property type="project" value="InterPro"/>
</dbReference>
<dbReference type="GO" id="GO:0051301">
    <property type="term" value="P:cell division"/>
    <property type="evidence" value="ECO:0007669"/>
    <property type="project" value="UniProtKB-UniRule"/>
</dbReference>
<dbReference type="GO" id="GO:0043937">
    <property type="term" value="P:regulation of sporulation"/>
    <property type="evidence" value="ECO:0007669"/>
    <property type="project" value="InterPro"/>
</dbReference>
<dbReference type="Gene3D" id="3.10.28.10">
    <property type="entry name" value="Homing endonucleases"/>
    <property type="match status" value="1"/>
</dbReference>
<dbReference type="HAMAP" id="MF_01420">
    <property type="entry name" value="HTH_type_WhiA"/>
    <property type="match status" value="1"/>
</dbReference>
<dbReference type="InterPro" id="IPR027434">
    <property type="entry name" value="Homing_endonucl"/>
</dbReference>
<dbReference type="InterPro" id="IPR004042">
    <property type="entry name" value="Intein_endonuc_central"/>
</dbReference>
<dbReference type="InterPro" id="IPR018478">
    <property type="entry name" value="Sporu_reg_WhiA_N_dom"/>
</dbReference>
<dbReference type="InterPro" id="IPR003802">
    <property type="entry name" value="Sporulation_regulator_WhiA"/>
</dbReference>
<dbReference type="InterPro" id="IPR023054">
    <property type="entry name" value="Sporulation_regulator_WhiA_C"/>
</dbReference>
<dbReference type="InterPro" id="IPR039518">
    <property type="entry name" value="WhiA_LAGLIDADG_dom"/>
</dbReference>
<dbReference type="NCBIfam" id="TIGR00647">
    <property type="entry name" value="DNA_bind_WhiA"/>
    <property type="match status" value="1"/>
</dbReference>
<dbReference type="PANTHER" id="PTHR37307">
    <property type="entry name" value="CELL DIVISION PROTEIN WHIA-RELATED"/>
    <property type="match status" value="1"/>
</dbReference>
<dbReference type="PANTHER" id="PTHR37307:SF1">
    <property type="entry name" value="CELL DIVISION PROTEIN WHIA-RELATED"/>
    <property type="match status" value="1"/>
</dbReference>
<dbReference type="Pfam" id="PF02650">
    <property type="entry name" value="HTH_WhiA"/>
    <property type="match status" value="1"/>
</dbReference>
<dbReference type="Pfam" id="PF14527">
    <property type="entry name" value="LAGLIDADG_WhiA"/>
    <property type="match status" value="1"/>
</dbReference>
<dbReference type="Pfam" id="PF10298">
    <property type="entry name" value="WhiA_N"/>
    <property type="match status" value="1"/>
</dbReference>
<dbReference type="SUPFAM" id="SSF55608">
    <property type="entry name" value="Homing endonucleases"/>
    <property type="match status" value="1"/>
</dbReference>
<dbReference type="PROSITE" id="PS50819">
    <property type="entry name" value="INTEIN_ENDONUCLEASE"/>
    <property type="match status" value="1"/>
</dbReference>
<reference key="1">
    <citation type="journal article" date="2006" name="Genome Res.">
        <title>Skewed genomic variability in strains of the toxigenic bacterial pathogen, Clostridium perfringens.</title>
        <authorList>
            <person name="Myers G.S.A."/>
            <person name="Rasko D.A."/>
            <person name="Cheung J.K."/>
            <person name="Ravel J."/>
            <person name="Seshadri R."/>
            <person name="DeBoy R.T."/>
            <person name="Ren Q."/>
            <person name="Varga J."/>
            <person name="Awad M.M."/>
            <person name="Brinkac L.M."/>
            <person name="Daugherty S.C."/>
            <person name="Haft D.H."/>
            <person name="Dodson R.J."/>
            <person name="Madupu R."/>
            <person name="Nelson W.C."/>
            <person name="Rosovitz M.J."/>
            <person name="Sullivan S.A."/>
            <person name="Khouri H."/>
            <person name="Dimitrov G.I."/>
            <person name="Watkins K.L."/>
            <person name="Mulligan S."/>
            <person name="Benton J."/>
            <person name="Radune D."/>
            <person name="Fisher D.J."/>
            <person name="Atkins H.S."/>
            <person name="Hiscox T."/>
            <person name="Jost B.H."/>
            <person name="Billington S.J."/>
            <person name="Songer J.G."/>
            <person name="McClane B.A."/>
            <person name="Titball R.W."/>
            <person name="Rood J.I."/>
            <person name="Melville S.B."/>
            <person name="Paulsen I.T."/>
        </authorList>
    </citation>
    <scope>NUCLEOTIDE SEQUENCE [LARGE SCALE GENOMIC DNA]</scope>
    <source>
        <strain>ATCC 13124 / DSM 756 / JCM 1290 / NCIMB 6125 / NCTC 8237 / S 107 / Type A</strain>
    </source>
</reference>
<gene>
    <name evidence="1" type="primary">whiA</name>
    <name type="ordered locus">CPF_0345</name>
</gene>
<keyword id="KW-0131">Cell cycle</keyword>
<keyword id="KW-0132">Cell division</keyword>
<keyword id="KW-0238">DNA-binding</keyword>
<protein>
    <recommendedName>
        <fullName evidence="1">Probable cell division protein WhiA</fullName>
    </recommendedName>
</protein>
<evidence type="ECO:0000255" key="1">
    <source>
        <dbReference type="HAMAP-Rule" id="MF_01420"/>
    </source>
</evidence>
<sequence length="316" mass="35810">MSFSAKVKGEICRYIDISKEEALAQISAIMKVCGTLAFSGRQISFKMTTENPASARLMFTILKDYFDIHAKLMVKKSNSLKKNNIYMVVVTEEMGVKKLLEITGILREIDGIMSLDYHIDENLVDTEEKKKAYIRGAFIGGGSISNPEKTYHLEFVTHSQEYAEDLGKLINTFGLKAKVIQRKNSYIVYIKEGEQIVDLLNIIGAHTALLELENIRIMKEMRNNVNRLVNCETANLSKTVNAAVRQVESIKLIEREIGLARLPKNLREVAELRLTYPEESLKELGEMLEPPVGKSGVNHRLRKIEKIAEELRTGNF</sequence>
<feature type="chain" id="PRO_0000376467" description="Probable cell division protein WhiA">
    <location>
        <begin position="1"/>
        <end position="316"/>
    </location>
</feature>
<feature type="DNA-binding region" description="H-T-H motif" evidence="1">
    <location>
        <begin position="280"/>
        <end position="313"/>
    </location>
</feature>
<proteinExistence type="inferred from homology"/>
<organism>
    <name type="scientific">Clostridium perfringens (strain ATCC 13124 / DSM 756 / JCM 1290 / NCIMB 6125 / NCTC 8237 / Type A)</name>
    <dbReference type="NCBI Taxonomy" id="195103"/>
    <lineage>
        <taxon>Bacteria</taxon>
        <taxon>Bacillati</taxon>
        <taxon>Bacillota</taxon>
        <taxon>Clostridia</taxon>
        <taxon>Eubacteriales</taxon>
        <taxon>Clostridiaceae</taxon>
        <taxon>Clostridium</taxon>
    </lineage>
</organism>
<accession>Q0TU86</accession>
<name>WHIA_CLOP1</name>
<comment type="function">
    <text evidence="1">Involved in cell division and chromosome segregation.</text>
</comment>
<comment type="similarity">
    <text evidence="1">Belongs to the WhiA family.</text>
</comment>